<keyword id="KW-0963">Cytoplasm</keyword>
<keyword id="KW-0489">Methyltransferase</keyword>
<keyword id="KW-1185">Reference proteome</keyword>
<keyword id="KW-0949">S-adenosyl-L-methionine</keyword>
<keyword id="KW-0808">Transferase</keyword>
<name>PRMA_DESAL</name>
<accession>B8FBE9</accession>
<proteinExistence type="inferred from homology"/>
<feature type="chain" id="PRO_1000192615" description="Ribosomal protein L11 methyltransferase">
    <location>
        <begin position="1"/>
        <end position="310"/>
    </location>
</feature>
<feature type="binding site" evidence="1">
    <location>
        <position position="156"/>
    </location>
    <ligand>
        <name>S-adenosyl-L-methionine</name>
        <dbReference type="ChEBI" id="CHEBI:59789"/>
    </ligand>
</feature>
<feature type="binding site" evidence="1">
    <location>
        <position position="179"/>
    </location>
    <ligand>
        <name>S-adenosyl-L-methionine</name>
        <dbReference type="ChEBI" id="CHEBI:59789"/>
    </ligand>
</feature>
<feature type="binding site" evidence="1">
    <location>
        <position position="201"/>
    </location>
    <ligand>
        <name>S-adenosyl-L-methionine</name>
        <dbReference type="ChEBI" id="CHEBI:59789"/>
    </ligand>
</feature>
<feature type="binding site" evidence="1">
    <location>
        <position position="246"/>
    </location>
    <ligand>
        <name>S-adenosyl-L-methionine</name>
        <dbReference type="ChEBI" id="CHEBI:59789"/>
    </ligand>
</feature>
<comment type="function">
    <text evidence="1">Methylates ribosomal protein L11.</text>
</comment>
<comment type="catalytic activity">
    <reaction evidence="1">
        <text>L-lysyl-[protein] + 3 S-adenosyl-L-methionine = N(6),N(6),N(6)-trimethyl-L-lysyl-[protein] + 3 S-adenosyl-L-homocysteine + 3 H(+)</text>
        <dbReference type="Rhea" id="RHEA:54192"/>
        <dbReference type="Rhea" id="RHEA-COMP:9752"/>
        <dbReference type="Rhea" id="RHEA-COMP:13826"/>
        <dbReference type="ChEBI" id="CHEBI:15378"/>
        <dbReference type="ChEBI" id="CHEBI:29969"/>
        <dbReference type="ChEBI" id="CHEBI:57856"/>
        <dbReference type="ChEBI" id="CHEBI:59789"/>
        <dbReference type="ChEBI" id="CHEBI:61961"/>
    </reaction>
</comment>
<comment type="subcellular location">
    <subcellularLocation>
        <location evidence="1">Cytoplasm</location>
    </subcellularLocation>
</comment>
<comment type="similarity">
    <text evidence="1">Belongs to the methyltransferase superfamily. PrmA family.</text>
</comment>
<organism>
    <name type="scientific">Desulfatibacillum aliphaticivorans</name>
    <dbReference type="NCBI Taxonomy" id="218208"/>
    <lineage>
        <taxon>Bacteria</taxon>
        <taxon>Pseudomonadati</taxon>
        <taxon>Thermodesulfobacteriota</taxon>
        <taxon>Desulfobacteria</taxon>
        <taxon>Desulfobacterales</taxon>
        <taxon>Desulfatibacillaceae</taxon>
        <taxon>Desulfatibacillum</taxon>
    </lineage>
</organism>
<dbReference type="EC" id="2.1.1.-" evidence="1"/>
<dbReference type="EMBL" id="CP001322">
    <property type="protein sequence ID" value="ACL04593.1"/>
    <property type="molecule type" value="Genomic_DNA"/>
</dbReference>
<dbReference type="RefSeq" id="WP_015947662.1">
    <property type="nucleotide sequence ID" value="NC_011768.1"/>
</dbReference>
<dbReference type="SMR" id="B8FBE9"/>
<dbReference type="KEGG" id="dal:Dalk_2903"/>
<dbReference type="eggNOG" id="COG2264">
    <property type="taxonomic scope" value="Bacteria"/>
</dbReference>
<dbReference type="HOGENOM" id="CLU_049382_0_1_7"/>
<dbReference type="Proteomes" id="UP000000739">
    <property type="component" value="Chromosome"/>
</dbReference>
<dbReference type="GO" id="GO:0005737">
    <property type="term" value="C:cytoplasm"/>
    <property type="evidence" value="ECO:0007669"/>
    <property type="project" value="UniProtKB-SubCell"/>
</dbReference>
<dbReference type="GO" id="GO:0016279">
    <property type="term" value="F:protein-lysine N-methyltransferase activity"/>
    <property type="evidence" value="ECO:0007669"/>
    <property type="project" value="RHEA"/>
</dbReference>
<dbReference type="GO" id="GO:0032259">
    <property type="term" value="P:methylation"/>
    <property type="evidence" value="ECO:0007669"/>
    <property type="project" value="UniProtKB-KW"/>
</dbReference>
<dbReference type="CDD" id="cd02440">
    <property type="entry name" value="AdoMet_MTases"/>
    <property type="match status" value="1"/>
</dbReference>
<dbReference type="Gene3D" id="3.40.50.150">
    <property type="entry name" value="Vaccinia Virus protein VP39"/>
    <property type="match status" value="1"/>
</dbReference>
<dbReference type="HAMAP" id="MF_00735">
    <property type="entry name" value="Methyltr_PrmA"/>
    <property type="match status" value="1"/>
</dbReference>
<dbReference type="InterPro" id="IPR050078">
    <property type="entry name" value="Ribosomal_L11_MeTrfase_PrmA"/>
</dbReference>
<dbReference type="InterPro" id="IPR004498">
    <property type="entry name" value="Ribosomal_PrmA_MeTrfase"/>
</dbReference>
<dbReference type="InterPro" id="IPR029063">
    <property type="entry name" value="SAM-dependent_MTases_sf"/>
</dbReference>
<dbReference type="NCBIfam" id="TIGR00406">
    <property type="entry name" value="prmA"/>
    <property type="match status" value="1"/>
</dbReference>
<dbReference type="PANTHER" id="PTHR43648">
    <property type="entry name" value="ELECTRON TRANSFER FLAVOPROTEIN BETA SUBUNIT LYSINE METHYLTRANSFERASE"/>
    <property type="match status" value="1"/>
</dbReference>
<dbReference type="PANTHER" id="PTHR43648:SF1">
    <property type="entry name" value="ELECTRON TRANSFER FLAVOPROTEIN BETA SUBUNIT LYSINE METHYLTRANSFERASE"/>
    <property type="match status" value="1"/>
</dbReference>
<dbReference type="Pfam" id="PF06325">
    <property type="entry name" value="PrmA"/>
    <property type="match status" value="1"/>
</dbReference>
<dbReference type="PIRSF" id="PIRSF000401">
    <property type="entry name" value="RPL11_MTase"/>
    <property type="match status" value="1"/>
</dbReference>
<dbReference type="SUPFAM" id="SSF53335">
    <property type="entry name" value="S-adenosyl-L-methionine-dependent methyltransferases"/>
    <property type="match status" value="1"/>
</dbReference>
<sequence>MQWMEIKIVFDAAEPELAQEMVSYLVMEHGAEGLEMTTPGETGMVQDGSGSSVPDSKEHSVTAFLPLDDLFEGRKADLTRALDDLKGSVLTDYSVHFSKQDDQPWETAWKAHFHPIEIGESLVIKPSWEDYENPEKRMLIELDPGMAFGTGTHPTTAVCLEMIETECLKKAPERFLDVGTGSGILMIGAYKLGARKVFGCDNDMDALEAAAKNLKGNQVHEGDFGLWLGDLLAGIVEGAFDMVAANITAEANVMLIPGLPRIMAPGSIFIASGIMAEKKDLVLEALDACRFSVERVQETGGWVGIAARMP</sequence>
<evidence type="ECO:0000255" key="1">
    <source>
        <dbReference type="HAMAP-Rule" id="MF_00735"/>
    </source>
</evidence>
<gene>
    <name evidence="1" type="primary">prmA</name>
    <name type="ordered locus">Dalk_2903</name>
</gene>
<protein>
    <recommendedName>
        <fullName evidence="1">Ribosomal protein L11 methyltransferase</fullName>
        <shortName evidence="1">L11 Mtase</shortName>
        <ecNumber evidence="1">2.1.1.-</ecNumber>
    </recommendedName>
</protein>
<reference key="1">
    <citation type="journal article" date="2012" name="Environ. Microbiol.">
        <title>The genome sequence of Desulfatibacillum alkenivorans AK-01: a blueprint for anaerobic alkane oxidation.</title>
        <authorList>
            <person name="Callaghan A.V."/>
            <person name="Morris B.E."/>
            <person name="Pereira I.A."/>
            <person name="McInerney M.J."/>
            <person name="Austin R.N."/>
            <person name="Groves J.T."/>
            <person name="Kukor J.J."/>
            <person name="Suflita J.M."/>
            <person name="Young L.Y."/>
            <person name="Zylstra G.J."/>
            <person name="Wawrik B."/>
        </authorList>
    </citation>
    <scope>NUCLEOTIDE SEQUENCE [LARGE SCALE GENOMIC DNA]</scope>
    <source>
        <strain>AK-01</strain>
    </source>
</reference>